<keyword id="KW-0067">ATP-binding</keyword>
<keyword id="KW-0460">Magnesium</keyword>
<keyword id="KW-0464">Manganese</keyword>
<keyword id="KW-0479">Metal-binding</keyword>
<keyword id="KW-0547">Nucleotide-binding</keyword>
<keyword id="KW-0548">Nucleotidyltransferase</keyword>
<keyword id="KW-0808">Transferase</keyword>
<sequence>MTLSFTARWRDELPATYTALLPTPLKNARLIWYNDKLAQQLAIPASLFDVTNGAGVWGGETLLPGMSPVAQVCSGHQFGVWAGQLGDGRGILLGEQLLADGSTLDWHLKGAGLTPYSRMGDGRAVLRSTIRESLASEAMHYLGIPTTRALSIVASDTPVQRETQETGAMLMRLAQSHMRFGHFEHFYYRREPEKVQQLADFAIRHYWPQWQDVPEKYVLWFEEVAARTGRLIAEWQTVGFSHGVMNTDNMSILGLTIDYGPFGFLDDYDPGFIGNHSDHQGRYRFDNQPSVALWNLQRLAQTLTPFIEIDALNRALDRYQDALLTHYGQRMRQKLGFFTEQKDDNVLLNELFSLMAREGSDYSRTFRMLSHTEQQSASSPLRDTFIDRAAFDAWFDRYRARLRTEAVDDALRQQQMQRVNPAVVLRNWLAQRAIDAAEQGDMAELHWLHEVLRQPFTDRDDDYASRPPEWGKRLEVSCSS</sequence>
<name>SELO_SALCH</name>
<proteinExistence type="inferred from homology"/>
<feature type="chain" id="PRO_0000271863" description="Protein nucleotidyltransferase YdiU">
    <location>
        <begin position="1"/>
        <end position="480"/>
    </location>
</feature>
<feature type="active site" description="Proton acceptor" evidence="1">
    <location>
        <position position="248"/>
    </location>
</feature>
<feature type="binding site" evidence="1">
    <location>
        <position position="86"/>
    </location>
    <ligand>
        <name>ATP</name>
        <dbReference type="ChEBI" id="CHEBI:30616"/>
    </ligand>
</feature>
<feature type="binding site" evidence="1">
    <location>
        <position position="88"/>
    </location>
    <ligand>
        <name>ATP</name>
        <dbReference type="ChEBI" id="CHEBI:30616"/>
    </ligand>
</feature>
<feature type="binding site" evidence="1">
    <location>
        <position position="89"/>
    </location>
    <ligand>
        <name>ATP</name>
        <dbReference type="ChEBI" id="CHEBI:30616"/>
    </ligand>
</feature>
<feature type="binding site" evidence="1">
    <location>
        <position position="109"/>
    </location>
    <ligand>
        <name>ATP</name>
        <dbReference type="ChEBI" id="CHEBI:30616"/>
    </ligand>
</feature>
<feature type="binding site" evidence="1">
    <location>
        <position position="121"/>
    </location>
    <ligand>
        <name>ATP</name>
        <dbReference type="ChEBI" id="CHEBI:30616"/>
    </ligand>
</feature>
<feature type="binding site" evidence="1">
    <location>
        <position position="122"/>
    </location>
    <ligand>
        <name>ATP</name>
        <dbReference type="ChEBI" id="CHEBI:30616"/>
    </ligand>
</feature>
<feature type="binding site" evidence="1">
    <location>
        <position position="172"/>
    </location>
    <ligand>
        <name>ATP</name>
        <dbReference type="ChEBI" id="CHEBI:30616"/>
    </ligand>
</feature>
<feature type="binding site" evidence="1">
    <location>
        <position position="179"/>
    </location>
    <ligand>
        <name>ATP</name>
        <dbReference type="ChEBI" id="CHEBI:30616"/>
    </ligand>
</feature>
<feature type="binding site" evidence="1">
    <location>
        <position position="249"/>
    </location>
    <ligand>
        <name>Mg(2+)</name>
        <dbReference type="ChEBI" id="CHEBI:18420"/>
    </ligand>
</feature>
<feature type="binding site" evidence="1">
    <location>
        <position position="258"/>
    </location>
    <ligand>
        <name>ATP</name>
        <dbReference type="ChEBI" id="CHEBI:30616"/>
    </ligand>
</feature>
<feature type="binding site" evidence="1">
    <location>
        <position position="258"/>
    </location>
    <ligand>
        <name>Mg(2+)</name>
        <dbReference type="ChEBI" id="CHEBI:18420"/>
    </ligand>
</feature>
<organism>
    <name type="scientific">Salmonella choleraesuis (strain SC-B67)</name>
    <dbReference type="NCBI Taxonomy" id="321314"/>
    <lineage>
        <taxon>Bacteria</taxon>
        <taxon>Pseudomonadati</taxon>
        <taxon>Pseudomonadota</taxon>
        <taxon>Gammaproteobacteria</taxon>
        <taxon>Enterobacterales</taxon>
        <taxon>Enterobacteriaceae</taxon>
        <taxon>Salmonella</taxon>
    </lineage>
</organism>
<accession>Q57PU1</accession>
<dbReference type="EC" id="2.7.7.-" evidence="1"/>
<dbReference type="EC" id="2.7.7.108" evidence="1"/>
<dbReference type="EMBL" id="AE017220">
    <property type="protein sequence ID" value="AAX65270.1"/>
    <property type="molecule type" value="Genomic_DNA"/>
</dbReference>
<dbReference type="RefSeq" id="WP_001539883.1">
    <property type="nucleotide sequence ID" value="NC_006905.1"/>
</dbReference>
<dbReference type="SMR" id="Q57PU1"/>
<dbReference type="KEGG" id="sec:SCH_1364"/>
<dbReference type="HOGENOM" id="CLU_010245_4_1_6"/>
<dbReference type="Proteomes" id="UP000000538">
    <property type="component" value="Chromosome"/>
</dbReference>
<dbReference type="GO" id="GO:0070733">
    <property type="term" value="F:AMPylase activity"/>
    <property type="evidence" value="ECO:0007669"/>
    <property type="project" value="RHEA"/>
</dbReference>
<dbReference type="GO" id="GO:0005524">
    <property type="term" value="F:ATP binding"/>
    <property type="evidence" value="ECO:0007669"/>
    <property type="project" value="UniProtKB-UniRule"/>
</dbReference>
<dbReference type="GO" id="GO:0000287">
    <property type="term" value="F:magnesium ion binding"/>
    <property type="evidence" value="ECO:0007669"/>
    <property type="project" value="UniProtKB-UniRule"/>
</dbReference>
<dbReference type="HAMAP" id="MF_00692">
    <property type="entry name" value="YdiU_SelO"/>
    <property type="match status" value="1"/>
</dbReference>
<dbReference type="InterPro" id="IPR054838">
    <property type="entry name" value="adnlytase_SelO"/>
</dbReference>
<dbReference type="InterPro" id="IPR003846">
    <property type="entry name" value="SelO"/>
</dbReference>
<dbReference type="NCBIfam" id="NF040880">
    <property type="entry name" value="adnlytase_SelO"/>
    <property type="match status" value="1"/>
</dbReference>
<dbReference type="NCBIfam" id="NF000658">
    <property type="entry name" value="PRK00029.1"/>
    <property type="match status" value="1"/>
</dbReference>
<dbReference type="PANTHER" id="PTHR32057">
    <property type="entry name" value="PROTEIN ADENYLYLTRANSFERASE SELO, MITOCHONDRIAL"/>
    <property type="match status" value="1"/>
</dbReference>
<dbReference type="PANTHER" id="PTHR32057:SF14">
    <property type="entry name" value="PROTEIN ADENYLYLTRANSFERASE SELO, MITOCHONDRIAL"/>
    <property type="match status" value="1"/>
</dbReference>
<dbReference type="Pfam" id="PF02696">
    <property type="entry name" value="SelO"/>
    <property type="match status" value="1"/>
</dbReference>
<gene>
    <name evidence="1" type="primary">ydiU</name>
    <name evidence="1" type="synonym">selO</name>
    <name type="ordered locus">SCH_1364</name>
</gene>
<protein>
    <recommendedName>
        <fullName evidence="1">Protein nucleotidyltransferase YdiU</fullName>
        <ecNumber evidence="1">2.7.7.-</ecNumber>
    </recommendedName>
    <alternativeName>
        <fullName evidence="1">Protein adenylyltransferase YdiU</fullName>
        <ecNumber evidence="1">2.7.7.108</ecNumber>
    </alternativeName>
    <alternativeName>
        <fullName evidence="1">Protein uridylyltransferase YdiU</fullName>
        <ecNumber evidence="1">2.7.7.-</ecNumber>
    </alternativeName>
</protein>
<evidence type="ECO:0000255" key="1">
    <source>
        <dbReference type="HAMAP-Rule" id="MF_00692"/>
    </source>
</evidence>
<reference key="1">
    <citation type="journal article" date="2005" name="Nucleic Acids Res.">
        <title>The genome sequence of Salmonella enterica serovar Choleraesuis, a highly invasive and resistant zoonotic pathogen.</title>
        <authorList>
            <person name="Chiu C.-H."/>
            <person name="Tang P."/>
            <person name="Chu C."/>
            <person name="Hu S."/>
            <person name="Bao Q."/>
            <person name="Yu J."/>
            <person name="Chou Y.-Y."/>
            <person name="Wang H.-S."/>
            <person name="Lee Y.-S."/>
        </authorList>
    </citation>
    <scope>NUCLEOTIDE SEQUENCE [LARGE SCALE GENOMIC DNA]</scope>
    <source>
        <strain>SC-B67</strain>
    </source>
</reference>
<comment type="function">
    <text evidence="1">Nucleotidyltransferase involved in the post-translational modification of proteins. It can catalyze the addition of adenosine monophosphate (AMP) or uridine monophosphate (UMP) to a protein, resulting in modifications known as AMPylation and UMPylation.</text>
</comment>
<comment type="catalytic activity">
    <reaction evidence="1">
        <text>L-seryl-[protein] + ATP = 3-O-(5'-adenylyl)-L-seryl-[protein] + diphosphate</text>
        <dbReference type="Rhea" id="RHEA:58120"/>
        <dbReference type="Rhea" id="RHEA-COMP:9863"/>
        <dbReference type="Rhea" id="RHEA-COMP:15073"/>
        <dbReference type="ChEBI" id="CHEBI:29999"/>
        <dbReference type="ChEBI" id="CHEBI:30616"/>
        <dbReference type="ChEBI" id="CHEBI:33019"/>
        <dbReference type="ChEBI" id="CHEBI:142516"/>
        <dbReference type="EC" id="2.7.7.108"/>
    </reaction>
</comment>
<comment type="catalytic activity">
    <reaction evidence="1">
        <text>L-threonyl-[protein] + ATP = 3-O-(5'-adenylyl)-L-threonyl-[protein] + diphosphate</text>
        <dbReference type="Rhea" id="RHEA:54292"/>
        <dbReference type="Rhea" id="RHEA-COMP:11060"/>
        <dbReference type="Rhea" id="RHEA-COMP:13847"/>
        <dbReference type="ChEBI" id="CHEBI:30013"/>
        <dbReference type="ChEBI" id="CHEBI:30616"/>
        <dbReference type="ChEBI" id="CHEBI:33019"/>
        <dbReference type="ChEBI" id="CHEBI:138113"/>
        <dbReference type="EC" id="2.7.7.108"/>
    </reaction>
</comment>
<comment type="catalytic activity">
    <reaction evidence="1">
        <text>L-tyrosyl-[protein] + ATP = O-(5'-adenylyl)-L-tyrosyl-[protein] + diphosphate</text>
        <dbReference type="Rhea" id="RHEA:54288"/>
        <dbReference type="Rhea" id="RHEA-COMP:10136"/>
        <dbReference type="Rhea" id="RHEA-COMP:13846"/>
        <dbReference type="ChEBI" id="CHEBI:30616"/>
        <dbReference type="ChEBI" id="CHEBI:33019"/>
        <dbReference type="ChEBI" id="CHEBI:46858"/>
        <dbReference type="ChEBI" id="CHEBI:83624"/>
        <dbReference type="EC" id="2.7.7.108"/>
    </reaction>
</comment>
<comment type="catalytic activity">
    <reaction evidence="1">
        <text>L-histidyl-[protein] + UTP = N(tele)-(5'-uridylyl)-L-histidyl-[protein] + diphosphate</text>
        <dbReference type="Rhea" id="RHEA:83891"/>
        <dbReference type="Rhea" id="RHEA-COMP:9745"/>
        <dbReference type="Rhea" id="RHEA-COMP:20239"/>
        <dbReference type="ChEBI" id="CHEBI:29979"/>
        <dbReference type="ChEBI" id="CHEBI:33019"/>
        <dbReference type="ChEBI" id="CHEBI:46398"/>
        <dbReference type="ChEBI" id="CHEBI:233474"/>
    </reaction>
</comment>
<comment type="catalytic activity">
    <reaction evidence="1">
        <text>L-seryl-[protein] + UTP = O-(5'-uridylyl)-L-seryl-[protein] + diphosphate</text>
        <dbReference type="Rhea" id="RHEA:64604"/>
        <dbReference type="Rhea" id="RHEA-COMP:9863"/>
        <dbReference type="Rhea" id="RHEA-COMP:16635"/>
        <dbReference type="ChEBI" id="CHEBI:29999"/>
        <dbReference type="ChEBI" id="CHEBI:33019"/>
        <dbReference type="ChEBI" id="CHEBI:46398"/>
        <dbReference type="ChEBI" id="CHEBI:156051"/>
    </reaction>
</comment>
<comment type="catalytic activity">
    <reaction evidence="1">
        <text>L-tyrosyl-[protein] + UTP = O-(5'-uridylyl)-L-tyrosyl-[protein] + diphosphate</text>
        <dbReference type="Rhea" id="RHEA:83887"/>
        <dbReference type="Rhea" id="RHEA-COMP:10136"/>
        <dbReference type="Rhea" id="RHEA-COMP:20238"/>
        <dbReference type="ChEBI" id="CHEBI:33019"/>
        <dbReference type="ChEBI" id="CHEBI:46398"/>
        <dbReference type="ChEBI" id="CHEBI:46858"/>
        <dbReference type="ChEBI" id="CHEBI:90602"/>
    </reaction>
</comment>
<comment type="cofactor">
    <cofactor evidence="1">
        <name>Mg(2+)</name>
        <dbReference type="ChEBI" id="CHEBI:18420"/>
    </cofactor>
    <cofactor evidence="1">
        <name>Mn(2+)</name>
        <dbReference type="ChEBI" id="CHEBI:29035"/>
    </cofactor>
</comment>
<comment type="similarity">
    <text evidence="1">Belongs to the SELO family.</text>
</comment>